<comment type="similarity">
    <text evidence="1">Belongs to the universal ribosomal protein uS2 family.</text>
</comment>
<keyword id="KW-1185">Reference proteome</keyword>
<keyword id="KW-0687">Ribonucleoprotein</keyword>
<keyword id="KW-0689">Ribosomal protein</keyword>
<evidence type="ECO:0000255" key="1">
    <source>
        <dbReference type="HAMAP-Rule" id="MF_00291"/>
    </source>
</evidence>
<evidence type="ECO:0000305" key="2"/>
<name>RS2_STRMU</name>
<dbReference type="EMBL" id="AE014133">
    <property type="protein sequence ID" value="AAN59635.1"/>
    <property type="molecule type" value="Genomic_DNA"/>
</dbReference>
<dbReference type="RefSeq" id="NP_722329.1">
    <property type="nucleotide sequence ID" value="NC_004350.2"/>
</dbReference>
<dbReference type="RefSeq" id="WP_002262347.1">
    <property type="nucleotide sequence ID" value="NC_004350.2"/>
</dbReference>
<dbReference type="SMR" id="Q8DS11"/>
<dbReference type="STRING" id="210007.SMU_2032"/>
<dbReference type="GeneID" id="93860236"/>
<dbReference type="KEGG" id="smu:SMU_2032"/>
<dbReference type="PATRIC" id="fig|210007.7.peg.1812"/>
<dbReference type="eggNOG" id="COG0052">
    <property type="taxonomic scope" value="Bacteria"/>
</dbReference>
<dbReference type="HOGENOM" id="CLU_040318_1_2_9"/>
<dbReference type="OrthoDB" id="9808036at2"/>
<dbReference type="PhylomeDB" id="Q8DS11"/>
<dbReference type="Proteomes" id="UP000002512">
    <property type="component" value="Chromosome"/>
</dbReference>
<dbReference type="GO" id="GO:0022627">
    <property type="term" value="C:cytosolic small ribosomal subunit"/>
    <property type="evidence" value="ECO:0007669"/>
    <property type="project" value="TreeGrafter"/>
</dbReference>
<dbReference type="GO" id="GO:0003735">
    <property type="term" value="F:structural constituent of ribosome"/>
    <property type="evidence" value="ECO:0007669"/>
    <property type="project" value="InterPro"/>
</dbReference>
<dbReference type="GO" id="GO:0006412">
    <property type="term" value="P:translation"/>
    <property type="evidence" value="ECO:0007669"/>
    <property type="project" value="UniProtKB-UniRule"/>
</dbReference>
<dbReference type="CDD" id="cd01425">
    <property type="entry name" value="RPS2"/>
    <property type="match status" value="1"/>
</dbReference>
<dbReference type="FunFam" id="1.10.287.610:FF:000001">
    <property type="entry name" value="30S ribosomal protein S2"/>
    <property type="match status" value="1"/>
</dbReference>
<dbReference type="Gene3D" id="3.40.50.10490">
    <property type="entry name" value="Glucose-6-phosphate isomerase like protein, domain 1"/>
    <property type="match status" value="1"/>
</dbReference>
<dbReference type="Gene3D" id="1.10.287.610">
    <property type="entry name" value="Helix hairpin bin"/>
    <property type="match status" value="1"/>
</dbReference>
<dbReference type="HAMAP" id="MF_00291_B">
    <property type="entry name" value="Ribosomal_uS2_B"/>
    <property type="match status" value="1"/>
</dbReference>
<dbReference type="InterPro" id="IPR001865">
    <property type="entry name" value="Ribosomal_uS2"/>
</dbReference>
<dbReference type="InterPro" id="IPR005706">
    <property type="entry name" value="Ribosomal_uS2_bac/mit/plastid"/>
</dbReference>
<dbReference type="InterPro" id="IPR018130">
    <property type="entry name" value="Ribosomal_uS2_CS"/>
</dbReference>
<dbReference type="InterPro" id="IPR023591">
    <property type="entry name" value="Ribosomal_uS2_flav_dom_sf"/>
</dbReference>
<dbReference type="NCBIfam" id="TIGR01011">
    <property type="entry name" value="rpsB_bact"/>
    <property type="match status" value="1"/>
</dbReference>
<dbReference type="PANTHER" id="PTHR12534">
    <property type="entry name" value="30S RIBOSOMAL PROTEIN S2 PROKARYOTIC AND ORGANELLAR"/>
    <property type="match status" value="1"/>
</dbReference>
<dbReference type="PANTHER" id="PTHR12534:SF0">
    <property type="entry name" value="SMALL RIBOSOMAL SUBUNIT PROTEIN US2M"/>
    <property type="match status" value="1"/>
</dbReference>
<dbReference type="Pfam" id="PF00318">
    <property type="entry name" value="Ribosomal_S2"/>
    <property type="match status" value="1"/>
</dbReference>
<dbReference type="PRINTS" id="PR00395">
    <property type="entry name" value="RIBOSOMALS2"/>
</dbReference>
<dbReference type="SUPFAM" id="SSF52313">
    <property type="entry name" value="Ribosomal protein S2"/>
    <property type="match status" value="1"/>
</dbReference>
<dbReference type="PROSITE" id="PS00962">
    <property type="entry name" value="RIBOSOMAL_S2_1"/>
    <property type="match status" value="1"/>
</dbReference>
<sequence length="261" mass="29093">MAVISMKQLLEAGVHFGHQTRRWNPKMAKYIFTERNGIHVIDLQQTVKLADQAYDFVRDAAANDAVILFVGTKKQASEAIKEEAERAGQYYINHRWLGGTLTNWDTIQKRIARLKEIKQMEVDGIFDVLPKKEVALLNKQRARLEKFLGGIEDMPRIPDIIYIVDPHKEQIAVKEAKKLGIPVVAMVDTNADPDDIDVIIPANDDAIRAVKLITSKLADAVIEGRQGEDSVEAVEAELAAGETQADSIEEIVEVVEGANEN</sequence>
<accession>Q8DS11</accession>
<protein>
    <recommendedName>
        <fullName evidence="1">Small ribosomal subunit protein uS2</fullName>
    </recommendedName>
    <alternativeName>
        <fullName evidence="2">30S ribosomal protein S2</fullName>
    </alternativeName>
</protein>
<proteinExistence type="inferred from homology"/>
<gene>
    <name evidence="1" type="primary">rpsB</name>
    <name type="synonym">rs2</name>
    <name type="ordered locus">SMU_2032</name>
</gene>
<feature type="chain" id="PRO_0000134250" description="Small ribosomal subunit protein uS2">
    <location>
        <begin position="1"/>
        <end position="261"/>
    </location>
</feature>
<reference key="1">
    <citation type="journal article" date="2002" name="Proc. Natl. Acad. Sci. U.S.A.">
        <title>Genome sequence of Streptococcus mutans UA159, a cariogenic dental pathogen.</title>
        <authorList>
            <person name="Ajdic D.J."/>
            <person name="McShan W.M."/>
            <person name="McLaughlin R.E."/>
            <person name="Savic G."/>
            <person name="Chang J."/>
            <person name="Carson M.B."/>
            <person name="Primeaux C."/>
            <person name="Tian R."/>
            <person name="Kenton S."/>
            <person name="Jia H.G."/>
            <person name="Lin S.P."/>
            <person name="Qian Y."/>
            <person name="Li S."/>
            <person name="Zhu H."/>
            <person name="Najar F.Z."/>
            <person name="Lai H."/>
            <person name="White J."/>
            <person name="Roe B.A."/>
            <person name="Ferretti J.J."/>
        </authorList>
    </citation>
    <scope>NUCLEOTIDE SEQUENCE [LARGE SCALE GENOMIC DNA]</scope>
    <source>
        <strain>ATCC 700610 / UA159</strain>
    </source>
</reference>
<organism>
    <name type="scientific">Streptococcus mutans serotype c (strain ATCC 700610 / UA159)</name>
    <dbReference type="NCBI Taxonomy" id="210007"/>
    <lineage>
        <taxon>Bacteria</taxon>
        <taxon>Bacillati</taxon>
        <taxon>Bacillota</taxon>
        <taxon>Bacilli</taxon>
        <taxon>Lactobacillales</taxon>
        <taxon>Streptococcaceae</taxon>
        <taxon>Streptococcus</taxon>
    </lineage>
</organism>